<organism>
    <name type="scientific">Laribacter hongkongensis (strain HLHK9)</name>
    <dbReference type="NCBI Taxonomy" id="557598"/>
    <lineage>
        <taxon>Bacteria</taxon>
        <taxon>Pseudomonadati</taxon>
        <taxon>Pseudomonadota</taxon>
        <taxon>Betaproteobacteria</taxon>
        <taxon>Neisseriales</taxon>
        <taxon>Aquaspirillaceae</taxon>
        <taxon>Laribacter</taxon>
    </lineage>
</organism>
<feature type="chain" id="PRO_1000193964" description="Large ribosomal subunit protein bL20">
    <location>
        <begin position="1"/>
        <end position="119"/>
    </location>
</feature>
<evidence type="ECO:0000255" key="1">
    <source>
        <dbReference type="HAMAP-Rule" id="MF_00382"/>
    </source>
</evidence>
<evidence type="ECO:0000305" key="2"/>
<reference key="1">
    <citation type="journal article" date="2009" name="PLoS Genet.">
        <title>The complete genome and proteome of Laribacter hongkongensis reveal potential mechanisms for adaptations to different temperatures and habitats.</title>
        <authorList>
            <person name="Woo P.C.Y."/>
            <person name="Lau S.K.P."/>
            <person name="Tse H."/>
            <person name="Teng J.L.L."/>
            <person name="Curreem S.O."/>
            <person name="Tsang A.K.L."/>
            <person name="Fan R.Y.Y."/>
            <person name="Wong G.K.M."/>
            <person name="Huang Y."/>
            <person name="Loman N.J."/>
            <person name="Snyder L.A.S."/>
            <person name="Cai J.J."/>
            <person name="Huang J.-D."/>
            <person name="Mak W."/>
            <person name="Pallen M.J."/>
            <person name="Lok S."/>
            <person name="Yuen K.-Y."/>
        </authorList>
    </citation>
    <scope>NUCLEOTIDE SEQUENCE [LARGE SCALE GENOMIC DNA]</scope>
    <source>
        <strain>HLHK9</strain>
    </source>
</reference>
<proteinExistence type="inferred from homology"/>
<gene>
    <name evidence="1" type="primary">rplT</name>
    <name type="ordered locus">LHK_02754</name>
</gene>
<comment type="function">
    <text evidence="1">Binds directly to 23S ribosomal RNA and is necessary for the in vitro assembly process of the 50S ribosomal subunit. It is not involved in the protein synthesizing functions of that subunit.</text>
</comment>
<comment type="similarity">
    <text evidence="1">Belongs to the bacterial ribosomal protein bL20 family.</text>
</comment>
<sequence length="119" mass="13637">MPRVKRGVTARARHKKVLALAKGYRGRRKNVYRVAKQAVMKAGQYAYRDRRQRKRQFRQLWIARINAAARECGLSYSKFMNGLKKASIEIDRKVLADLAVFEKAVFAQLVEKAKASLAA</sequence>
<dbReference type="EMBL" id="CP001154">
    <property type="protein sequence ID" value="ACO75735.1"/>
    <property type="molecule type" value="Genomic_DNA"/>
</dbReference>
<dbReference type="RefSeq" id="WP_012698198.1">
    <property type="nucleotide sequence ID" value="NC_012559.1"/>
</dbReference>
<dbReference type="SMR" id="C1DDA3"/>
<dbReference type="STRING" id="557598.LHK_02754"/>
<dbReference type="KEGG" id="lhk:LHK_02754"/>
<dbReference type="eggNOG" id="COG0292">
    <property type="taxonomic scope" value="Bacteria"/>
</dbReference>
<dbReference type="HOGENOM" id="CLU_123265_0_1_4"/>
<dbReference type="Proteomes" id="UP000002010">
    <property type="component" value="Chromosome"/>
</dbReference>
<dbReference type="GO" id="GO:1990904">
    <property type="term" value="C:ribonucleoprotein complex"/>
    <property type="evidence" value="ECO:0007669"/>
    <property type="project" value="UniProtKB-KW"/>
</dbReference>
<dbReference type="GO" id="GO:0005840">
    <property type="term" value="C:ribosome"/>
    <property type="evidence" value="ECO:0007669"/>
    <property type="project" value="UniProtKB-KW"/>
</dbReference>
<dbReference type="GO" id="GO:0019843">
    <property type="term" value="F:rRNA binding"/>
    <property type="evidence" value="ECO:0007669"/>
    <property type="project" value="UniProtKB-UniRule"/>
</dbReference>
<dbReference type="GO" id="GO:0003735">
    <property type="term" value="F:structural constituent of ribosome"/>
    <property type="evidence" value="ECO:0007669"/>
    <property type="project" value="InterPro"/>
</dbReference>
<dbReference type="GO" id="GO:0000027">
    <property type="term" value="P:ribosomal large subunit assembly"/>
    <property type="evidence" value="ECO:0007669"/>
    <property type="project" value="UniProtKB-UniRule"/>
</dbReference>
<dbReference type="GO" id="GO:0006412">
    <property type="term" value="P:translation"/>
    <property type="evidence" value="ECO:0007669"/>
    <property type="project" value="InterPro"/>
</dbReference>
<dbReference type="CDD" id="cd07026">
    <property type="entry name" value="Ribosomal_L20"/>
    <property type="match status" value="1"/>
</dbReference>
<dbReference type="FunFam" id="1.10.1900.20:FF:000001">
    <property type="entry name" value="50S ribosomal protein L20"/>
    <property type="match status" value="1"/>
</dbReference>
<dbReference type="Gene3D" id="6.10.160.10">
    <property type="match status" value="1"/>
</dbReference>
<dbReference type="Gene3D" id="1.10.1900.20">
    <property type="entry name" value="Ribosomal protein L20"/>
    <property type="match status" value="1"/>
</dbReference>
<dbReference type="HAMAP" id="MF_00382">
    <property type="entry name" value="Ribosomal_bL20"/>
    <property type="match status" value="1"/>
</dbReference>
<dbReference type="InterPro" id="IPR005813">
    <property type="entry name" value="Ribosomal_bL20"/>
</dbReference>
<dbReference type="InterPro" id="IPR049946">
    <property type="entry name" value="RIBOSOMAL_L20_CS"/>
</dbReference>
<dbReference type="InterPro" id="IPR035566">
    <property type="entry name" value="Ribosomal_protein_bL20_C"/>
</dbReference>
<dbReference type="NCBIfam" id="TIGR01032">
    <property type="entry name" value="rplT_bact"/>
    <property type="match status" value="1"/>
</dbReference>
<dbReference type="PANTHER" id="PTHR10986">
    <property type="entry name" value="39S RIBOSOMAL PROTEIN L20"/>
    <property type="match status" value="1"/>
</dbReference>
<dbReference type="Pfam" id="PF00453">
    <property type="entry name" value="Ribosomal_L20"/>
    <property type="match status" value="1"/>
</dbReference>
<dbReference type="PRINTS" id="PR00062">
    <property type="entry name" value="RIBOSOMALL20"/>
</dbReference>
<dbReference type="SUPFAM" id="SSF74731">
    <property type="entry name" value="Ribosomal protein L20"/>
    <property type="match status" value="1"/>
</dbReference>
<dbReference type="PROSITE" id="PS00937">
    <property type="entry name" value="RIBOSOMAL_L20"/>
    <property type="match status" value="1"/>
</dbReference>
<protein>
    <recommendedName>
        <fullName evidence="1">Large ribosomal subunit protein bL20</fullName>
    </recommendedName>
    <alternativeName>
        <fullName evidence="2">50S ribosomal protein L20</fullName>
    </alternativeName>
</protein>
<accession>C1DDA3</accession>
<keyword id="KW-1185">Reference proteome</keyword>
<keyword id="KW-0687">Ribonucleoprotein</keyword>
<keyword id="KW-0689">Ribosomal protein</keyword>
<keyword id="KW-0694">RNA-binding</keyword>
<keyword id="KW-0699">rRNA-binding</keyword>
<name>RL20_LARHH</name>